<accession>Q7T3N3</accession>
<sequence length="204" mass="24067">MGAYKYMQELWRKKQSDVMRFLLRVRCWQYRQLSSLHRTPKPTRPDKARRLGYKAKQGYVIYRIRVRRGGRKRPVPKGATYGKPVHHGVNQIKFARSLQSTAEERAGRHCGGLRVLSSYWVGEDSTYKFFEVILVDIFHKAIRRNPDTQWITKAVHKHREMRGLTSAGKKSRGLGKGHKFHLTIGGSRRAAWRRRNTLQLHRYR</sequence>
<protein>
    <recommendedName>
        <fullName evidence="3">Large ribosomal subunit protein eL15</fullName>
    </recommendedName>
    <alternativeName>
        <fullName>60S ribosomal protein L15</fullName>
    </alternativeName>
</protein>
<proteinExistence type="evidence at transcript level"/>
<feature type="initiator methionine" description="Removed" evidence="1">
    <location>
        <position position="1"/>
    </location>
</feature>
<feature type="chain" id="PRO_0000127544" description="Large ribosomal subunit protein eL15">
    <location>
        <begin position="2"/>
        <end position="204"/>
    </location>
</feature>
<gene>
    <name type="primary">rpl15</name>
</gene>
<comment type="function">
    <text evidence="2">Component of the large ribosomal subunit. The ribosome is a large ribonucleoprotein complex responsible for the synthesis of proteins in the cell.</text>
</comment>
<comment type="subunit">
    <text evidence="2">Component of the large ribosomal subunit.</text>
</comment>
<comment type="subcellular location">
    <subcellularLocation>
        <location evidence="2">Cytoplasm</location>
    </subcellularLocation>
</comment>
<comment type="similarity">
    <text evidence="3">Belongs to the eukaryotic ribosomal protein eL15 family.</text>
</comment>
<dbReference type="EMBL" id="AY249419">
    <property type="protein sequence ID" value="AAP35256.1"/>
    <property type="molecule type" value="mRNA"/>
</dbReference>
<dbReference type="SMR" id="Q7T3N3"/>
<dbReference type="GO" id="GO:0022625">
    <property type="term" value="C:cytosolic large ribosomal subunit"/>
    <property type="evidence" value="ECO:0007669"/>
    <property type="project" value="TreeGrafter"/>
</dbReference>
<dbReference type="GO" id="GO:0003723">
    <property type="term" value="F:RNA binding"/>
    <property type="evidence" value="ECO:0007669"/>
    <property type="project" value="TreeGrafter"/>
</dbReference>
<dbReference type="GO" id="GO:0003735">
    <property type="term" value="F:structural constituent of ribosome"/>
    <property type="evidence" value="ECO:0007669"/>
    <property type="project" value="InterPro"/>
</dbReference>
<dbReference type="GO" id="GO:0002181">
    <property type="term" value="P:cytoplasmic translation"/>
    <property type="evidence" value="ECO:0007669"/>
    <property type="project" value="TreeGrafter"/>
</dbReference>
<dbReference type="FunFam" id="3.40.1120.10:FF:000001">
    <property type="entry name" value="Ribosomal protein L15"/>
    <property type="match status" value="1"/>
</dbReference>
<dbReference type="Gene3D" id="3.40.1120.10">
    <property type="entry name" value="Ribosomal protein l15e"/>
    <property type="match status" value="1"/>
</dbReference>
<dbReference type="InterPro" id="IPR024794">
    <property type="entry name" value="Rbsml_eL15_core_dom_sf"/>
</dbReference>
<dbReference type="InterPro" id="IPR000439">
    <property type="entry name" value="Ribosomal_eL15"/>
</dbReference>
<dbReference type="InterPro" id="IPR020925">
    <property type="entry name" value="Ribosomal_eL15_CS"/>
</dbReference>
<dbReference type="InterPro" id="IPR012678">
    <property type="entry name" value="Ribosomal_uL23/eL15/eS24_sf"/>
</dbReference>
<dbReference type="NCBIfam" id="NF003269">
    <property type="entry name" value="PRK04243.1"/>
    <property type="match status" value="1"/>
</dbReference>
<dbReference type="PANTHER" id="PTHR11847:SF4">
    <property type="entry name" value="LARGE RIBOSOMAL SUBUNIT PROTEIN EL15"/>
    <property type="match status" value="1"/>
</dbReference>
<dbReference type="PANTHER" id="PTHR11847">
    <property type="entry name" value="RIBOSOMAL PROTEIN L15"/>
    <property type="match status" value="1"/>
</dbReference>
<dbReference type="Pfam" id="PF00827">
    <property type="entry name" value="Ribosomal_L15e"/>
    <property type="match status" value="1"/>
</dbReference>
<dbReference type="SMART" id="SM01384">
    <property type="entry name" value="Ribosomal_L15e"/>
    <property type="match status" value="1"/>
</dbReference>
<dbReference type="SUPFAM" id="SSF54189">
    <property type="entry name" value="Ribosomal proteins S24e, L23 and L15e"/>
    <property type="match status" value="1"/>
</dbReference>
<dbReference type="PROSITE" id="PS01194">
    <property type="entry name" value="RIBOSOMAL_L15E"/>
    <property type="match status" value="1"/>
</dbReference>
<reference key="1">
    <citation type="submission" date="2003-03" db="EMBL/GenBank/DDBJ databases">
        <title>Evaluating the potential of ribosomal protein L15 as a novel marker for phylogenetic analysis: a comparative analysis of 15 teleost RPL15 cDNAs.</title>
        <authorList>
            <person name="Song P."/>
            <person name="Zhang J."/>
            <person name="Xiang Z."/>
        </authorList>
    </citation>
    <scope>NUCLEOTIDE SEQUENCE [MRNA]</scope>
    <source>
        <tissue>Liver</tissue>
    </source>
</reference>
<name>RL15_PARDA</name>
<keyword id="KW-0963">Cytoplasm</keyword>
<keyword id="KW-0687">Ribonucleoprotein</keyword>
<keyword id="KW-0689">Ribosomal protein</keyword>
<evidence type="ECO:0000250" key="1"/>
<evidence type="ECO:0000250" key="2">
    <source>
        <dbReference type="UniProtKB" id="P61313"/>
    </source>
</evidence>
<evidence type="ECO:0000305" key="3"/>
<organism>
    <name type="scientific">Paramisgurnus dabryanus</name>
    <dbReference type="NCBI Taxonomy" id="90735"/>
    <lineage>
        <taxon>Eukaryota</taxon>
        <taxon>Metazoa</taxon>
        <taxon>Chordata</taxon>
        <taxon>Craniata</taxon>
        <taxon>Vertebrata</taxon>
        <taxon>Euteleostomi</taxon>
        <taxon>Actinopterygii</taxon>
        <taxon>Neopterygii</taxon>
        <taxon>Teleostei</taxon>
        <taxon>Ostariophysi</taxon>
        <taxon>Cypriniformes</taxon>
        <taxon>Cobitidae</taxon>
        <taxon>Cobitinae</taxon>
        <taxon>Paramisgurnus</taxon>
    </lineage>
</organism>